<sequence>MLKIFNTLTRQKEEFKPIHAGEVGMYVCGITVYDLCHIGHGRTFVAFDVVARYLRFLGYKLKYVRNITDIDDKIIKRANENGESFVALVDRMIAEMHQDFDALNILRPDSEPRATHHIQEIIELTRTLIEKGHAYVADNGDVMFDVPTDPTYGQLSRQDLEQLQAGARVDVVDVKRNPMDFVLWKMSKEGEPSWPSPWGEGRPGWHIECSAMNCKQLGNHFDIHGGGSDLMFPHHENEIAQSTCAHDGEYVNYWMHSGMVMVDREKMSKSLGNFFTVRDVLKYYDAETVRYFLMSGHYRSQLNYSEENLKQARASLERLYTALRGTDKSAAPAGGEAFEARFVEAMNDDFNTPEAYSVLFDMAREVNRLKGEDMTAANAMASHLRKISGVLGLLEQEPDVFLQSGAQADDGEVAEIEALIQQRLDARKAKDWAAADAARDRLAEMGIILEDGPQGTTWRRK</sequence>
<dbReference type="EC" id="6.1.1.16" evidence="1"/>
<dbReference type="EMBL" id="AE006468">
    <property type="protein sequence ID" value="AAL19491.1"/>
    <property type="molecule type" value="Genomic_DNA"/>
</dbReference>
<dbReference type="RefSeq" id="NP_459532.1">
    <property type="nucleotide sequence ID" value="NC_003197.2"/>
</dbReference>
<dbReference type="RefSeq" id="WP_000912376.1">
    <property type="nucleotide sequence ID" value="NC_003197.2"/>
</dbReference>
<dbReference type="SMR" id="Q8ZR68"/>
<dbReference type="STRING" id="99287.STM0537"/>
<dbReference type="PaxDb" id="99287-STM0537"/>
<dbReference type="GeneID" id="1252057"/>
<dbReference type="KEGG" id="stm:STM0537"/>
<dbReference type="PATRIC" id="fig|99287.12.peg.570"/>
<dbReference type="HOGENOM" id="CLU_013528_0_1_6"/>
<dbReference type="OMA" id="IMRWPSP"/>
<dbReference type="PhylomeDB" id="Q8ZR68"/>
<dbReference type="BioCyc" id="SENT99287:STM0537-MONOMER"/>
<dbReference type="Proteomes" id="UP000001014">
    <property type="component" value="Chromosome"/>
</dbReference>
<dbReference type="GO" id="GO:0005737">
    <property type="term" value="C:cytoplasm"/>
    <property type="evidence" value="ECO:0000318"/>
    <property type="project" value="GO_Central"/>
</dbReference>
<dbReference type="GO" id="GO:0005829">
    <property type="term" value="C:cytosol"/>
    <property type="evidence" value="ECO:0000318"/>
    <property type="project" value="GO_Central"/>
</dbReference>
<dbReference type="GO" id="GO:0005524">
    <property type="term" value="F:ATP binding"/>
    <property type="evidence" value="ECO:0000318"/>
    <property type="project" value="GO_Central"/>
</dbReference>
<dbReference type="GO" id="GO:0004817">
    <property type="term" value="F:cysteine-tRNA ligase activity"/>
    <property type="evidence" value="ECO:0000318"/>
    <property type="project" value="GO_Central"/>
</dbReference>
<dbReference type="GO" id="GO:0008270">
    <property type="term" value="F:zinc ion binding"/>
    <property type="evidence" value="ECO:0007669"/>
    <property type="project" value="UniProtKB-UniRule"/>
</dbReference>
<dbReference type="GO" id="GO:0006423">
    <property type="term" value="P:cysteinyl-tRNA aminoacylation"/>
    <property type="evidence" value="ECO:0000318"/>
    <property type="project" value="GO_Central"/>
</dbReference>
<dbReference type="CDD" id="cd07963">
    <property type="entry name" value="Anticodon_Ia_Cys"/>
    <property type="match status" value="1"/>
</dbReference>
<dbReference type="CDD" id="cd00672">
    <property type="entry name" value="CysRS_core"/>
    <property type="match status" value="1"/>
</dbReference>
<dbReference type="FunFam" id="1.20.120.1910:FF:000001">
    <property type="entry name" value="Cysteine--tRNA ligase"/>
    <property type="match status" value="1"/>
</dbReference>
<dbReference type="FunFam" id="3.40.50.620:FF:000009">
    <property type="entry name" value="Cysteine--tRNA ligase"/>
    <property type="match status" value="1"/>
</dbReference>
<dbReference type="Gene3D" id="1.20.120.1910">
    <property type="entry name" value="Cysteine-tRNA ligase, C-terminal anti-codon recognition domain"/>
    <property type="match status" value="1"/>
</dbReference>
<dbReference type="Gene3D" id="3.40.50.620">
    <property type="entry name" value="HUPs"/>
    <property type="match status" value="1"/>
</dbReference>
<dbReference type="HAMAP" id="MF_00041">
    <property type="entry name" value="Cys_tRNA_synth"/>
    <property type="match status" value="1"/>
</dbReference>
<dbReference type="InterPro" id="IPR015803">
    <property type="entry name" value="Cys-tRNA-ligase"/>
</dbReference>
<dbReference type="InterPro" id="IPR015273">
    <property type="entry name" value="Cys-tRNA-synt_Ia_DALR"/>
</dbReference>
<dbReference type="InterPro" id="IPR024909">
    <property type="entry name" value="Cys-tRNA/MSH_ligase"/>
</dbReference>
<dbReference type="InterPro" id="IPR056411">
    <property type="entry name" value="CysS_C"/>
</dbReference>
<dbReference type="InterPro" id="IPR014729">
    <property type="entry name" value="Rossmann-like_a/b/a_fold"/>
</dbReference>
<dbReference type="InterPro" id="IPR032678">
    <property type="entry name" value="tRNA-synt_1_cat_dom"/>
</dbReference>
<dbReference type="InterPro" id="IPR009080">
    <property type="entry name" value="tRNAsynth_Ia_anticodon-bd"/>
</dbReference>
<dbReference type="NCBIfam" id="TIGR00435">
    <property type="entry name" value="cysS"/>
    <property type="match status" value="1"/>
</dbReference>
<dbReference type="PANTHER" id="PTHR10890:SF3">
    <property type="entry name" value="CYSTEINE--TRNA LIGASE, CYTOPLASMIC"/>
    <property type="match status" value="1"/>
</dbReference>
<dbReference type="PANTHER" id="PTHR10890">
    <property type="entry name" value="CYSTEINYL-TRNA SYNTHETASE"/>
    <property type="match status" value="1"/>
</dbReference>
<dbReference type="Pfam" id="PF23493">
    <property type="entry name" value="CysS_C"/>
    <property type="match status" value="1"/>
</dbReference>
<dbReference type="Pfam" id="PF09190">
    <property type="entry name" value="DALR_2"/>
    <property type="match status" value="1"/>
</dbReference>
<dbReference type="Pfam" id="PF01406">
    <property type="entry name" value="tRNA-synt_1e"/>
    <property type="match status" value="1"/>
</dbReference>
<dbReference type="PRINTS" id="PR00983">
    <property type="entry name" value="TRNASYNTHCYS"/>
</dbReference>
<dbReference type="SMART" id="SM00840">
    <property type="entry name" value="DALR_2"/>
    <property type="match status" value="1"/>
</dbReference>
<dbReference type="SUPFAM" id="SSF47323">
    <property type="entry name" value="Anticodon-binding domain of a subclass of class I aminoacyl-tRNA synthetases"/>
    <property type="match status" value="1"/>
</dbReference>
<dbReference type="SUPFAM" id="SSF52374">
    <property type="entry name" value="Nucleotidylyl transferase"/>
    <property type="match status" value="1"/>
</dbReference>
<name>SYC_SALTY</name>
<keyword id="KW-0030">Aminoacyl-tRNA synthetase</keyword>
<keyword id="KW-0067">ATP-binding</keyword>
<keyword id="KW-0963">Cytoplasm</keyword>
<keyword id="KW-0436">Ligase</keyword>
<keyword id="KW-0479">Metal-binding</keyword>
<keyword id="KW-0547">Nucleotide-binding</keyword>
<keyword id="KW-0648">Protein biosynthesis</keyword>
<keyword id="KW-1185">Reference proteome</keyword>
<keyword id="KW-0862">Zinc</keyword>
<feature type="chain" id="PRO_0000159473" description="Cysteine--tRNA ligase">
    <location>
        <begin position="1"/>
        <end position="461"/>
    </location>
</feature>
<feature type="short sequence motif" description="'HIGH' region">
    <location>
        <begin position="30"/>
        <end position="40"/>
    </location>
</feature>
<feature type="short sequence motif" description="'KMSKS' region">
    <location>
        <begin position="266"/>
        <end position="270"/>
    </location>
</feature>
<feature type="binding site" evidence="1">
    <location>
        <position position="28"/>
    </location>
    <ligand>
        <name>Zn(2+)</name>
        <dbReference type="ChEBI" id="CHEBI:29105"/>
    </ligand>
</feature>
<feature type="binding site" evidence="1">
    <location>
        <position position="209"/>
    </location>
    <ligand>
        <name>Zn(2+)</name>
        <dbReference type="ChEBI" id="CHEBI:29105"/>
    </ligand>
</feature>
<feature type="binding site" evidence="1">
    <location>
        <position position="234"/>
    </location>
    <ligand>
        <name>Zn(2+)</name>
        <dbReference type="ChEBI" id="CHEBI:29105"/>
    </ligand>
</feature>
<feature type="binding site" evidence="1">
    <location>
        <position position="238"/>
    </location>
    <ligand>
        <name>Zn(2+)</name>
        <dbReference type="ChEBI" id="CHEBI:29105"/>
    </ligand>
</feature>
<feature type="binding site" evidence="1">
    <location>
        <position position="269"/>
    </location>
    <ligand>
        <name>ATP</name>
        <dbReference type="ChEBI" id="CHEBI:30616"/>
    </ligand>
</feature>
<gene>
    <name evidence="1" type="primary">cysS</name>
    <name type="ordered locus">STM0537</name>
</gene>
<reference key="1">
    <citation type="journal article" date="2001" name="Nature">
        <title>Complete genome sequence of Salmonella enterica serovar Typhimurium LT2.</title>
        <authorList>
            <person name="McClelland M."/>
            <person name="Sanderson K.E."/>
            <person name="Spieth J."/>
            <person name="Clifton S.W."/>
            <person name="Latreille P."/>
            <person name="Courtney L."/>
            <person name="Porwollik S."/>
            <person name="Ali J."/>
            <person name="Dante M."/>
            <person name="Du F."/>
            <person name="Hou S."/>
            <person name="Layman D."/>
            <person name="Leonard S."/>
            <person name="Nguyen C."/>
            <person name="Scott K."/>
            <person name="Holmes A."/>
            <person name="Grewal N."/>
            <person name="Mulvaney E."/>
            <person name="Ryan E."/>
            <person name="Sun H."/>
            <person name="Florea L."/>
            <person name="Miller W."/>
            <person name="Stoneking T."/>
            <person name="Nhan M."/>
            <person name="Waterston R."/>
            <person name="Wilson R.K."/>
        </authorList>
    </citation>
    <scope>NUCLEOTIDE SEQUENCE [LARGE SCALE GENOMIC DNA]</scope>
    <source>
        <strain>LT2 / SGSC1412 / ATCC 700720</strain>
    </source>
</reference>
<evidence type="ECO:0000255" key="1">
    <source>
        <dbReference type="HAMAP-Rule" id="MF_00041"/>
    </source>
</evidence>
<accession>Q8ZR68</accession>
<proteinExistence type="inferred from homology"/>
<organism>
    <name type="scientific">Salmonella typhimurium (strain LT2 / SGSC1412 / ATCC 700720)</name>
    <dbReference type="NCBI Taxonomy" id="99287"/>
    <lineage>
        <taxon>Bacteria</taxon>
        <taxon>Pseudomonadati</taxon>
        <taxon>Pseudomonadota</taxon>
        <taxon>Gammaproteobacteria</taxon>
        <taxon>Enterobacterales</taxon>
        <taxon>Enterobacteriaceae</taxon>
        <taxon>Salmonella</taxon>
    </lineage>
</organism>
<protein>
    <recommendedName>
        <fullName evidence="1">Cysteine--tRNA ligase</fullName>
        <ecNumber evidence="1">6.1.1.16</ecNumber>
    </recommendedName>
    <alternativeName>
        <fullName evidence="1">Cysteinyl-tRNA synthetase</fullName>
        <shortName evidence="1">CysRS</shortName>
    </alternativeName>
</protein>
<comment type="catalytic activity">
    <reaction evidence="1">
        <text>tRNA(Cys) + L-cysteine + ATP = L-cysteinyl-tRNA(Cys) + AMP + diphosphate</text>
        <dbReference type="Rhea" id="RHEA:17773"/>
        <dbReference type="Rhea" id="RHEA-COMP:9661"/>
        <dbReference type="Rhea" id="RHEA-COMP:9679"/>
        <dbReference type="ChEBI" id="CHEBI:30616"/>
        <dbReference type="ChEBI" id="CHEBI:33019"/>
        <dbReference type="ChEBI" id="CHEBI:35235"/>
        <dbReference type="ChEBI" id="CHEBI:78442"/>
        <dbReference type="ChEBI" id="CHEBI:78517"/>
        <dbReference type="ChEBI" id="CHEBI:456215"/>
        <dbReference type="EC" id="6.1.1.16"/>
    </reaction>
</comment>
<comment type="cofactor">
    <cofactor evidence="1">
        <name>Zn(2+)</name>
        <dbReference type="ChEBI" id="CHEBI:29105"/>
    </cofactor>
    <text evidence="1">Binds 1 zinc ion per subunit.</text>
</comment>
<comment type="subunit">
    <text evidence="1">Monomer.</text>
</comment>
<comment type="subcellular location">
    <subcellularLocation>
        <location evidence="1">Cytoplasm</location>
    </subcellularLocation>
</comment>
<comment type="similarity">
    <text evidence="1">Belongs to the class-I aminoacyl-tRNA synthetase family.</text>
</comment>